<keyword id="KW-0067">ATP-binding</keyword>
<keyword id="KW-0963">Cytoplasm</keyword>
<keyword id="KW-0418">Kinase</keyword>
<keyword id="KW-0545">Nucleotide biosynthesis</keyword>
<keyword id="KW-0547">Nucleotide-binding</keyword>
<keyword id="KW-1185">Reference proteome</keyword>
<keyword id="KW-0808">Transferase</keyword>
<accession>Q73S77</accession>
<evidence type="ECO:0000255" key="1">
    <source>
        <dbReference type="HAMAP-Rule" id="MF_00235"/>
    </source>
</evidence>
<name>KAD_MYCPA</name>
<dbReference type="EC" id="2.7.4.3" evidence="1"/>
<dbReference type="EMBL" id="AE016958">
    <property type="protein sequence ID" value="AAS06749.1"/>
    <property type="molecule type" value="Genomic_DNA"/>
</dbReference>
<dbReference type="RefSeq" id="WP_003879463.1">
    <property type="nucleotide sequence ID" value="NZ_CP106873.1"/>
</dbReference>
<dbReference type="SMR" id="Q73S77"/>
<dbReference type="STRING" id="262316.MAP_4199"/>
<dbReference type="KEGG" id="mpa:MAP_4199"/>
<dbReference type="PATRIC" id="fig|262316.17.peg.4471"/>
<dbReference type="eggNOG" id="COG0563">
    <property type="taxonomic scope" value="Bacteria"/>
</dbReference>
<dbReference type="HOGENOM" id="CLU_032354_4_1_11"/>
<dbReference type="UniPathway" id="UPA00588">
    <property type="reaction ID" value="UER00649"/>
</dbReference>
<dbReference type="Proteomes" id="UP000000580">
    <property type="component" value="Chromosome"/>
</dbReference>
<dbReference type="GO" id="GO:0005737">
    <property type="term" value="C:cytoplasm"/>
    <property type="evidence" value="ECO:0007669"/>
    <property type="project" value="UniProtKB-SubCell"/>
</dbReference>
<dbReference type="GO" id="GO:0004017">
    <property type="term" value="F:adenylate kinase activity"/>
    <property type="evidence" value="ECO:0007669"/>
    <property type="project" value="UniProtKB-UniRule"/>
</dbReference>
<dbReference type="GO" id="GO:0005524">
    <property type="term" value="F:ATP binding"/>
    <property type="evidence" value="ECO:0007669"/>
    <property type="project" value="UniProtKB-UniRule"/>
</dbReference>
<dbReference type="GO" id="GO:0044209">
    <property type="term" value="P:AMP salvage"/>
    <property type="evidence" value="ECO:0007669"/>
    <property type="project" value="UniProtKB-UniRule"/>
</dbReference>
<dbReference type="CDD" id="cd01428">
    <property type="entry name" value="ADK"/>
    <property type="match status" value="1"/>
</dbReference>
<dbReference type="Gene3D" id="3.40.50.300">
    <property type="entry name" value="P-loop containing nucleotide triphosphate hydrolases"/>
    <property type="match status" value="1"/>
</dbReference>
<dbReference type="HAMAP" id="MF_00235">
    <property type="entry name" value="Adenylate_kinase_Adk"/>
    <property type="match status" value="1"/>
</dbReference>
<dbReference type="InterPro" id="IPR000850">
    <property type="entry name" value="Adenylat/UMP-CMP_kin"/>
</dbReference>
<dbReference type="InterPro" id="IPR033690">
    <property type="entry name" value="Adenylat_kinase_CS"/>
</dbReference>
<dbReference type="InterPro" id="IPR027417">
    <property type="entry name" value="P-loop_NTPase"/>
</dbReference>
<dbReference type="NCBIfam" id="NF001381">
    <property type="entry name" value="PRK00279.1-3"/>
    <property type="match status" value="1"/>
</dbReference>
<dbReference type="NCBIfam" id="NF011100">
    <property type="entry name" value="PRK14527.1"/>
    <property type="match status" value="1"/>
</dbReference>
<dbReference type="NCBIfam" id="NF011104">
    <property type="entry name" value="PRK14531.1"/>
    <property type="match status" value="1"/>
</dbReference>
<dbReference type="NCBIfam" id="NF011105">
    <property type="entry name" value="PRK14532.1"/>
    <property type="match status" value="1"/>
</dbReference>
<dbReference type="PANTHER" id="PTHR23359">
    <property type="entry name" value="NUCLEOTIDE KINASE"/>
    <property type="match status" value="1"/>
</dbReference>
<dbReference type="Pfam" id="PF00406">
    <property type="entry name" value="ADK"/>
    <property type="match status" value="1"/>
</dbReference>
<dbReference type="PRINTS" id="PR00094">
    <property type="entry name" value="ADENYLTKNASE"/>
</dbReference>
<dbReference type="SUPFAM" id="SSF52540">
    <property type="entry name" value="P-loop containing nucleoside triphosphate hydrolases"/>
    <property type="match status" value="1"/>
</dbReference>
<dbReference type="PROSITE" id="PS00113">
    <property type="entry name" value="ADENYLATE_KINASE"/>
    <property type="match status" value="1"/>
</dbReference>
<organism>
    <name type="scientific">Mycolicibacterium paratuberculosis (strain ATCC BAA-968 / K-10)</name>
    <name type="common">Mycobacterium paratuberculosis</name>
    <dbReference type="NCBI Taxonomy" id="262316"/>
    <lineage>
        <taxon>Bacteria</taxon>
        <taxon>Bacillati</taxon>
        <taxon>Actinomycetota</taxon>
        <taxon>Actinomycetes</taxon>
        <taxon>Mycobacteriales</taxon>
        <taxon>Mycobacteriaceae</taxon>
        <taxon>Mycobacterium</taxon>
        <taxon>Mycobacterium avium complex (MAC)</taxon>
    </lineage>
</organism>
<feature type="chain" id="PRO_0000158802" description="Adenylate kinase">
    <location>
        <begin position="1"/>
        <end position="181"/>
    </location>
</feature>
<feature type="region of interest" description="NMP" evidence="1">
    <location>
        <begin position="30"/>
        <end position="59"/>
    </location>
</feature>
<feature type="region of interest" description="LID" evidence="1">
    <location>
        <begin position="126"/>
        <end position="132"/>
    </location>
</feature>
<feature type="binding site" evidence="1">
    <location>
        <begin position="10"/>
        <end position="15"/>
    </location>
    <ligand>
        <name>ATP</name>
        <dbReference type="ChEBI" id="CHEBI:30616"/>
    </ligand>
</feature>
<feature type="binding site" evidence="1">
    <location>
        <position position="31"/>
    </location>
    <ligand>
        <name>AMP</name>
        <dbReference type="ChEBI" id="CHEBI:456215"/>
    </ligand>
</feature>
<feature type="binding site" evidence="1">
    <location>
        <position position="36"/>
    </location>
    <ligand>
        <name>AMP</name>
        <dbReference type="ChEBI" id="CHEBI:456215"/>
    </ligand>
</feature>
<feature type="binding site" evidence="1">
    <location>
        <begin position="57"/>
        <end position="59"/>
    </location>
    <ligand>
        <name>AMP</name>
        <dbReference type="ChEBI" id="CHEBI:456215"/>
    </ligand>
</feature>
<feature type="binding site" evidence="1">
    <location>
        <begin position="85"/>
        <end position="88"/>
    </location>
    <ligand>
        <name>AMP</name>
        <dbReference type="ChEBI" id="CHEBI:456215"/>
    </ligand>
</feature>
<feature type="binding site" evidence="1">
    <location>
        <position position="92"/>
    </location>
    <ligand>
        <name>AMP</name>
        <dbReference type="ChEBI" id="CHEBI:456215"/>
    </ligand>
</feature>
<feature type="binding site" evidence="1">
    <location>
        <position position="127"/>
    </location>
    <ligand>
        <name>ATP</name>
        <dbReference type="ChEBI" id="CHEBI:30616"/>
    </ligand>
</feature>
<feature type="binding site" evidence="1">
    <location>
        <position position="129"/>
    </location>
    <ligand>
        <name>AMP</name>
        <dbReference type="ChEBI" id="CHEBI:456215"/>
    </ligand>
</feature>
<feature type="binding site" evidence="1">
    <location>
        <position position="140"/>
    </location>
    <ligand>
        <name>AMP</name>
        <dbReference type="ChEBI" id="CHEBI:456215"/>
    </ligand>
</feature>
<feature type="binding site" evidence="1">
    <location>
        <position position="166"/>
    </location>
    <ligand>
        <name>ATP</name>
        <dbReference type="ChEBI" id="CHEBI:30616"/>
    </ligand>
</feature>
<proteinExistence type="inferred from homology"/>
<comment type="function">
    <text evidence="1">Catalyzes the reversible transfer of the terminal phosphate group between ATP and AMP. Plays an important role in cellular energy homeostasis and in adenine nucleotide metabolism.</text>
</comment>
<comment type="catalytic activity">
    <reaction evidence="1">
        <text>AMP + ATP = 2 ADP</text>
        <dbReference type="Rhea" id="RHEA:12973"/>
        <dbReference type="ChEBI" id="CHEBI:30616"/>
        <dbReference type="ChEBI" id="CHEBI:456215"/>
        <dbReference type="ChEBI" id="CHEBI:456216"/>
        <dbReference type="EC" id="2.7.4.3"/>
    </reaction>
</comment>
<comment type="pathway">
    <text evidence="1">Purine metabolism; AMP biosynthesis via salvage pathway; AMP from ADP: step 1/1.</text>
</comment>
<comment type="subunit">
    <text evidence="1">Monomer.</text>
</comment>
<comment type="subcellular location">
    <subcellularLocation>
        <location evidence="1">Cytoplasm</location>
    </subcellularLocation>
</comment>
<comment type="domain">
    <text evidence="1">Consists of three domains, a large central CORE domain and two small peripheral domains, NMPbind and LID, which undergo movements during catalysis. The LID domain closes over the site of phosphoryl transfer upon ATP binding. Assembling and dissambling the active center during each catalytic cycle provides an effective means to prevent ATP hydrolysis.</text>
</comment>
<comment type="similarity">
    <text evidence="1">Belongs to the adenylate kinase family.</text>
</comment>
<gene>
    <name evidence="1" type="primary">adk</name>
    <name type="ordered locus">MAP_4199</name>
</gene>
<protein>
    <recommendedName>
        <fullName evidence="1">Adenylate kinase</fullName>
        <shortName evidence="1">AK</shortName>
        <ecNumber evidence="1">2.7.4.3</ecNumber>
    </recommendedName>
    <alternativeName>
        <fullName evidence="1">ATP-AMP transphosphorylase</fullName>
    </alternativeName>
    <alternativeName>
        <fullName evidence="1">ATP:AMP phosphotransferase</fullName>
    </alternativeName>
    <alternativeName>
        <fullName evidence="1">Adenylate monophosphate kinase</fullName>
    </alternativeName>
</protein>
<sequence>MRVVLLGPPGAGKGTQAQKLSEKLGIPQISTGELFRSNIENGTKLGLEAKRYLDAGDLVPAELTNQLVDDRLSEPDAANGFILDGFPRSLQQAKALHEMLERRGTDIDAVLEFRVSQDELLARLKARGRADDTDEVILNRMKVYRDETAPLLDYYRDQLKTVDAVGTLDEVFARALCALGK</sequence>
<reference key="1">
    <citation type="journal article" date="2005" name="Proc. Natl. Acad. Sci. U.S.A.">
        <title>The complete genome sequence of Mycobacterium avium subspecies paratuberculosis.</title>
        <authorList>
            <person name="Li L."/>
            <person name="Bannantine J.P."/>
            <person name="Zhang Q."/>
            <person name="Amonsin A."/>
            <person name="May B.J."/>
            <person name="Alt D."/>
            <person name="Banerji N."/>
            <person name="Kanjilal S."/>
            <person name="Kapur V."/>
        </authorList>
    </citation>
    <scope>NUCLEOTIDE SEQUENCE [LARGE SCALE GENOMIC DNA]</scope>
    <source>
        <strain>ATCC BAA-968 / K-10</strain>
    </source>
</reference>